<comment type="function">
    <text evidence="1">Allows the formation of correctly charged Asn-tRNA(Asn) or Gln-tRNA(Gln) through the transamidation of misacylated Asp-tRNA(Asn) or Glu-tRNA(Gln) in organisms which lack either or both of asparaginyl-tRNA or glutaminyl-tRNA synthetases. The reaction takes place in the presence of glutamine and ATP through an activated phospho-Asp-tRNA(Asn) or phospho-Glu-tRNA(Gln).</text>
</comment>
<comment type="catalytic activity">
    <reaction evidence="1">
        <text>L-glutamyl-tRNA(Gln) + L-glutamine + ATP + H2O = L-glutaminyl-tRNA(Gln) + L-glutamate + ADP + phosphate + H(+)</text>
        <dbReference type="Rhea" id="RHEA:17521"/>
        <dbReference type="Rhea" id="RHEA-COMP:9681"/>
        <dbReference type="Rhea" id="RHEA-COMP:9684"/>
        <dbReference type="ChEBI" id="CHEBI:15377"/>
        <dbReference type="ChEBI" id="CHEBI:15378"/>
        <dbReference type="ChEBI" id="CHEBI:29985"/>
        <dbReference type="ChEBI" id="CHEBI:30616"/>
        <dbReference type="ChEBI" id="CHEBI:43474"/>
        <dbReference type="ChEBI" id="CHEBI:58359"/>
        <dbReference type="ChEBI" id="CHEBI:78520"/>
        <dbReference type="ChEBI" id="CHEBI:78521"/>
        <dbReference type="ChEBI" id="CHEBI:456216"/>
    </reaction>
</comment>
<comment type="catalytic activity">
    <reaction evidence="1">
        <text>L-aspartyl-tRNA(Asn) + L-glutamine + ATP + H2O = L-asparaginyl-tRNA(Asn) + L-glutamate + ADP + phosphate + 2 H(+)</text>
        <dbReference type="Rhea" id="RHEA:14513"/>
        <dbReference type="Rhea" id="RHEA-COMP:9674"/>
        <dbReference type="Rhea" id="RHEA-COMP:9677"/>
        <dbReference type="ChEBI" id="CHEBI:15377"/>
        <dbReference type="ChEBI" id="CHEBI:15378"/>
        <dbReference type="ChEBI" id="CHEBI:29985"/>
        <dbReference type="ChEBI" id="CHEBI:30616"/>
        <dbReference type="ChEBI" id="CHEBI:43474"/>
        <dbReference type="ChEBI" id="CHEBI:58359"/>
        <dbReference type="ChEBI" id="CHEBI:78515"/>
        <dbReference type="ChEBI" id="CHEBI:78516"/>
        <dbReference type="ChEBI" id="CHEBI:456216"/>
    </reaction>
</comment>
<comment type="subunit">
    <text evidence="1">Heterotrimer of A, B and C subunits.</text>
</comment>
<comment type="similarity">
    <text evidence="1">Belongs to the GatC family.</text>
</comment>
<gene>
    <name evidence="1" type="primary">gatC</name>
    <name type="ordered locus">Rmet_0050</name>
</gene>
<dbReference type="EC" id="6.3.5.-" evidence="1"/>
<dbReference type="EMBL" id="CP000352">
    <property type="protein sequence ID" value="ABF06936.1"/>
    <property type="molecule type" value="Genomic_DNA"/>
</dbReference>
<dbReference type="RefSeq" id="WP_008648047.1">
    <property type="nucleotide sequence ID" value="NC_007973.1"/>
</dbReference>
<dbReference type="SMR" id="Q1LSE0"/>
<dbReference type="STRING" id="266264.Rmet_0050"/>
<dbReference type="GeneID" id="60822769"/>
<dbReference type="KEGG" id="rme:Rmet_0050"/>
<dbReference type="eggNOG" id="COG0721">
    <property type="taxonomic scope" value="Bacteria"/>
</dbReference>
<dbReference type="HOGENOM" id="CLU_105899_2_2_4"/>
<dbReference type="Proteomes" id="UP000002429">
    <property type="component" value="Chromosome"/>
</dbReference>
<dbReference type="GO" id="GO:0050566">
    <property type="term" value="F:asparaginyl-tRNA synthase (glutamine-hydrolyzing) activity"/>
    <property type="evidence" value="ECO:0007669"/>
    <property type="project" value="RHEA"/>
</dbReference>
<dbReference type="GO" id="GO:0005524">
    <property type="term" value="F:ATP binding"/>
    <property type="evidence" value="ECO:0007669"/>
    <property type="project" value="UniProtKB-KW"/>
</dbReference>
<dbReference type="GO" id="GO:0050567">
    <property type="term" value="F:glutaminyl-tRNA synthase (glutamine-hydrolyzing) activity"/>
    <property type="evidence" value="ECO:0007669"/>
    <property type="project" value="UniProtKB-UniRule"/>
</dbReference>
<dbReference type="GO" id="GO:0070681">
    <property type="term" value="P:glutaminyl-tRNAGln biosynthesis via transamidation"/>
    <property type="evidence" value="ECO:0007669"/>
    <property type="project" value="TreeGrafter"/>
</dbReference>
<dbReference type="GO" id="GO:0006450">
    <property type="term" value="P:regulation of translational fidelity"/>
    <property type="evidence" value="ECO:0007669"/>
    <property type="project" value="InterPro"/>
</dbReference>
<dbReference type="GO" id="GO:0006412">
    <property type="term" value="P:translation"/>
    <property type="evidence" value="ECO:0007669"/>
    <property type="project" value="UniProtKB-UniRule"/>
</dbReference>
<dbReference type="Gene3D" id="1.10.20.60">
    <property type="entry name" value="Glu-tRNAGln amidotransferase C subunit, N-terminal domain"/>
    <property type="match status" value="1"/>
</dbReference>
<dbReference type="HAMAP" id="MF_00122">
    <property type="entry name" value="GatC"/>
    <property type="match status" value="1"/>
</dbReference>
<dbReference type="InterPro" id="IPR036113">
    <property type="entry name" value="Asp/Glu-ADT_sf_sub_c"/>
</dbReference>
<dbReference type="InterPro" id="IPR003837">
    <property type="entry name" value="GatC"/>
</dbReference>
<dbReference type="NCBIfam" id="TIGR00135">
    <property type="entry name" value="gatC"/>
    <property type="match status" value="1"/>
</dbReference>
<dbReference type="PANTHER" id="PTHR15004">
    <property type="entry name" value="GLUTAMYL-TRNA(GLN) AMIDOTRANSFERASE SUBUNIT C, MITOCHONDRIAL"/>
    <property type="match status" value="1"/>
</dbReference>
<dbReference type="PANTHER" id="PTHR15004:SF0">
    <property type="entry name" value="GLUTAMYL-TRNA(GLN) AMIDOTRANSFERASE SUBUNIT C, MITOCHONDRIAL"/>
    <property type="match status" value="1"/>
</dbReference>
<dbReference type="Pfam" id="PF02686">
    <property type="entry name" value="GatC"/>
    <property type="match status" value="1"/>
</dbReference>
<dbReference type="SUPFAM" id="SSF141000">
    <property type="entry name" value="Glu-tRNAGln amidotransferase C subunit"/>
    <property type="match status" value="1"/>
</dbReference>
<keyword id="KW-0067">ATP-binding</keyword>
<keyword id="KW-0436">Ligase</keyword>
<keyword id="KW-0547">Nucleotide-binding</keyword>
<keyword id="KW-0648">Protein biosynthesis</keyword>
<keyword id="KW-1185">Reference proteome</keyword>
<protein>
    <recommendedName>
        <fullName evidence="1">Aspartyl/glutamyl-tRNA(Asn/Gln) amidotransferase subunit C</fullName>
        <shortName evidence="1">Asp/Glu-ADT subunit C</shortName>
        <ecNumber evidence="1">6.3.5.-</ecNumber>
    </recommendedName>
</protein>
<proteinExistence type="inferred from homology"/>
<accession>Q1LSE0</accession>
<name>GATC_CUPMC</name>
<reference key="1">
    <citation type="journal article" date="2010" name="PLoS ONE">
        <title>The complete genome sequence of Cupriavidus metallidurans strain CH34, a master survivalist in harsh and anthropogenic environments.</title>
        <authorList>
            <person name="Janssen P.J."/>
            <person name="Van Houdt R."/>
            <person name="Moors H."/>
            <person name="Monsieurs P."/>
            <person name="Morin N."/>
            <person name="Michaux A."/>
            <person name="Benotmane M.A."/>
            <person name="Leys N."/>
            <person name="Vallaeys T."/>
            <person name="Lapidus A."/>
            <person name="Monchy S."/>
            <person name="Medigue C."/>
            <person name="Taghavi S."/>
            <person name="McCorkle S."/>
            <person name="Dunn J."/>
            <person name="van der Lelie D."/>
            <person name="Mergeay M."/>
        </authorList>
    </citation>
    <scope>NUCLEOTIDE SEQUENCE [LARGE SCALE GENOMIC DNA]</scope>
    <source>
        <strain>ATCC 43123 / DSM 2839 / NBRC 102507 / CH34</strain>
    </source>
</reference>
<feature type="chain" id="PRO_1000016187" description="Aspartyl/glutamyl-tRNA(Asn/Gln) amidotransferase subunit C">
    <location>
        <begin position="1"/>
        <end position="99"/>
    </location>
</feature>
<organism>
    <name type="scientific">Cupriavidus metallidurans (strain ATCC 43123 / DSM 2839 / NBRC 102507 / CH34)</name>
    <name type="common">Ralstonia metallidurans</name>
    <dbReference type="NCBI Taxonomy" id="266264"/>
    <lineage>
        <taxon>Bacteria</taxon>
        <taxon>Pseudomonadati</taxon>
        <taxon>Pseudomonadota</taxon>
        <taxon>Betaproteobacteria</taxon>
        <taxon>Burkholderiales</taxon>
        <taxon>Burkholderiaceae</taxon>
        <taxon>Cupriavidus</taxon>
    </lineage>
</organism>
<sequence length="99" mass="10972">MALALSDVKRIAHLARIETSDAEAEQTLAQLNNFFSLVEQMQAVDTTGIEPLAHPLSAVRDIAQRLREDAVTESDRRADYQRPAPATENGLYLVPKVIE</sequence>
<evidence type="ECO:0000255" key="1">
    <source>
        <dbReference type="HAMAP-Rule" id="MF_00122"/>
    </source>
</evidence>